<dbReference type="EC" id="7.1.1.-"/>
<dbReference type="EMBL" id="AE013218">
    <property type="protein sequence ID" value="AAM67720.1"/>
    <property type="molecule type" value="Genomic_DNA"/>
</dbReference>
<dbReference type="RefSeq" id="WP_011053687.1">
    <property type="nucleotide sequence ID" value="NC_004061.1"/>
</dbReference>
<dbReference type="SMR" id="Q8K9Y2"/>
<dbReference type="STRING" id="198804.BUsg_152"/>
<dbReference type="GeneID" id="93003622"/>
<dbReference type="KEGG" id="bas:BUsg_152"/>
<dbReference type="eggNOG" id="COG1034">
    <property type="taxonomic scope" value="Bacteria"/>
</dbReference>
<dbReference type="HOGENOM" id="CLU_000422_11_4_6"/>
<dbReference type="Proteomes" id="UP000000416">
    <property type="component" value="Chromosome"/>
</dbReference>
<dbReference type="GO" id="GO:0016020">
    <property type="term" value="C:membrane"/>
    <property type="evidence" value="ECO:0007669"/>
    <property type="project" value="InterPro"/>
</dbReference>
<dbReference type="GO" id="GO:0051537">
    <property type="term" value="F:2 iron, 2 sulfur cluster binding"/>
    <property type="evidence" value="ECO:0007669"/>
    <property type="project" value="UniProtKB-KW"/>
</dbReference>
<dbReference type="GO" id="GO:0051539">
    <property type="term" value="F:4 iron, 4 sulfur cluster binding"/>
    <property type="evidence" value="ECO:0007669"/>
    <property type="project" value="UniProtKB-KW"/>
</dbReference>
<dbReference type="GO" id="GO:0046872">
    <property type="term" value="F:metal ion binding"/>
    <property type="evidence" value="ECO:0007669"/>
    <property type="project" value="UniProtKB-KW"/>
</dbReference>
<dbReference type="GO" id="GO:0008137">
    <property type="term" value="F:NADH dehydrogenase (ubiquinone) activity"/>
    <property type="evidence" value="ECO:0007669"/>
    <property type="project" value="InterPro"/>
</dbReference>
<dbReference type="GO" id="GO:0048038">
    <property type="term" value="F:quinone binding"/>
    <property type="evidence" value="ECO:0007669"/>
    <property type="project" value="UniProtKB-KW"/>
</dbReference>
<dbReference type="GO" id="GO:0042773">
    <property type="term" value="P:ATP synthesis coupled electron transport"/>
    <property type="evidence" value="ECO:0007669"/>
    <property type="project" value="InterPro"/>
</dbReference>
<dbReference type="CDD" id="cd00207">
    <property type="entry name" value="fer2"/>
    <property type="match status" value="1"/>
</dbReference>
<dbReference type="CDD" id="cd02788">
    <property type="entry name" value="MopB_CT_NDH-1_NuoG2-N7"/>
    <property type="match status" value="1"/>
</dbReference>
<dbReference type="CDD" id="cd02771">
    <property type="entry name" value="MopB_NDH-1_NuoG2-N7"/>
    <property type="match status" value="1"/>
</dbReference>
<dbReference type="FunFam" id="3.10.20.740:FF:000002">
    <property type="entry name" value="NADH-quinone oxidoreductase"/>
    <property type="match status" value="1"/>
</dbReference>
<dbReference type="Gene3D" id="3.10.20.740">
    <property type="match status" value="1"/>
</dbReference>
<dbReference type="Gene3D" id="3.30.200.210">
    <property type="match status" value="1"/>
</dbReference>
<dbReference type="InterPro" id="IPR036010">
    <property type="entry name" value="2Fe-2S_ferredoxin-like_sf"/>
</dbReference>
<dbReference type="InterPro" id="IPR001041">
    <property type="entry name" value="2Fe-2S_ferredoxin-type"/>
</dbReference>
<dbReference type="InterPro" id="IPR006656">
    <property type="entry name" value="Mopterin_OxRdtase"/>
</dbReference>
<dbReference type="InterPro" id="IPR006963">
    <property type="entry name" value="Mopterin_OxRdtase_4Fe-4S_dom"/>
</dbReference>
<dbReference type="InterPro" id="IPR000283">
    <property type="entry name" value="NADH_UbQ_OxRdtase_75kDa_su_CS"/>
</dbReference>
<dbReference type="InterPro" id="IPR054351">
    <property type="entry name" value="NADH_UbQ_OxRdtase_ferredoxin"/>
</dbReference>
<dbReference type="InterPro" id="IPR010228">
    <property type="entry name" value="NADH_UbQ_OxRdtase_Gsu"/>
</dbReference>
<dbReference type="InterPro" id="IPR019574">
    <property type="entry name" value="NADH_UbQ_OxRdtase_Gsu_4Fe4S-bd"/>
</dbReference>
<dbReference type="InterPro" id="IPR050123">
    <property type="entry name" value="Prok_molybdopt-oxidoreductase"/>
</dbReference>
<dbReference type="NCBIfam" id="TIGR01973">
    <property type="entry name" value="NuoG"/>
    <property type="match status" value="1"/>
</dbReference>
<dbReference type="PANTHER" id="PTHR43105:SF10">
    <property type="entry name" value="NADH-QUINONE OXIDOREDUCTASE SUBUNIT G"/>
    <property type="match status" value="1"/>
</dbReference>
<dbReference type="PANTHER" id="PTHR43105">
    <property type="entry name" value="RESPIRATORY NITRATE REDUCTASE"/>
    <property type="match status" value="1"/>
</dbReference>
<dbReference type="Pfam" id="PF13510">
    <property type="entry name" value="Fer2_4"/>
    <property type="match status" value="1"/>
</dbReference>
<dbReference type="Pfam" id="PF22117">
    <property type="entry name" value="Fer4_Nqo3"/>
    <property type="match status" value="1"/>
</dbReference>
<dbReference type="Pfam" id="PF04879">
    <property type="entry name" value="Molybdop_Fe4S4"/>
    <property type="match status" value="1"/>
</dbReference>
<dbReference type="Pfam" id="PF00384">
    <property type="entry name" value="Molybdopterin"/>
    <property type="match status" value="1"/>
</dbReference>
<dbReference type="Pfam" id="PF10588">
    <property type="entry name" value="NADH-G_4Fe-4S_3"/>
    <property type="match status" value="1"/>
</dbReference>
<dbReference type="SMART" id="SM00926">
    <property type="entry name" value="Molybdop_Fe4S4"/>
    <property type="match status" value="1"/>
</dbReference>
<dbReference type="SMART" id="SM00929">
    <property type="entry name" value="NADH-G_4Fe-4S_3"/>
    <property type="match status" value="1"/>
</dbReference>
<dbReference type="SUPFAM" id="SSF54292">
    <property type="entry name" value="2Fe-2S ferredoxin-like"/>
    <property type="match status" value="1"/>
</dbReference>
<dbReference type="SUPFAM" id="SSF54862">
    <property type="entry name" value="4Fe-4S ferredoxins"/>
    <property type="match status" value="1"/>
</dbReference>
<dbReference type="SUPFAM" id="SSF53706">
    <property type="entry name" value="Formate dehydrogenase/DMSO reductase, domains 1-3"/>
    <property type="match status" value="1"/>
</dbReference>
<dbReference type="PROSITE" id="PS51085">
    <property type="entry name" value="2FE2S_FER_2"/>
    <property type="match status" value="1"/>
</dbReference>
<dbReference type="PROSITE" id="PS51839">
    <property type="entry name" value="4FE4S_HC3"/>
    <property type="match status" value="1"/>
</dbReference>
<dbReference type="PROSITE" id="PS51669">
    <property type="entry name" value="4FE4S_MOW_BIS_MGD"/>
    <property type="match status" value="1"/>
</dbReference>
<dbReference type="PROSITE" id="PS00641">
    <property type="entry name" value="COMPLEX1_75K_1"/>
    <property type="match status" value="1"/>
</dbReference>
<dbReference type="PROSITE" id="PS00642">
    <property type="entry name" value="COMPLEX1_75K_2"/>
    <property type="match status" value="1"/>
</dbReference>
<dbReference type="PROSITE" id="PS00643">
    <property type="entry name" value="COMPLEX1_75K_3"/>
    <property type="match status" value="1"/>
</dbReference>
<organism>
    <name type="scientific">Buchnera aphidicola subsp. Schizaphis graminum (strain Sg)</name>
    <dbReference type="NCBI Taxonomy" id="198804"/>
    <lineage>
        <taxon>Bacteria</taxon>
        <taxon>Pseudomonadati</taxon>
        <taxon>Pseudomonadota</taxon>
        <taxon>Gammaproteobacteria</taxon>
        <taxon>Enterobacterales</taxon>
        <taxon>Erwiniaceae</taxon>
        <taxon>Buchnera</taxon>
    </lineage>
</organism>
<protein>
    <recommendedName>
        <fullName>NADH-quinone oxidoreductase subunit G</fullName>
        <ecNumber>7.1.1.-</ecNumber>
    </recommendedName>
    <alternativeName>
        <fullName>NADH dehydrogenase I subunit G</fullName>
    </alternativeName>
    <alternativeName>
        <fullName>NDH-1 subunit G</fullName>
    </alternativeName>
</protein>
<feature type="chain" id="PRO_0000118543" description="NADH-quinone oxidoreductase subunit G">
    <location>
        <begin position="1"/>
        <end position="910"/>
    </location>
</feature>
<feature type="domain" description="2Fe-2S ferredoxin-type" evidence="3">
    <location>
        <begin position="1"/>
        <end position="83"/>
    </location>
</feature>
<feature type="domain" description="4Fe-4S His(Cys)3-ligated-type" evidence="5">
    <location>
        <begin position="83"/>
        <end position="122"/>
    </location>
</feature>
<feature type="domain" description="4Fe-4S Mo/W bis-MGD-type" evidence="4">
    <location>
        <begin position="221"/>
        <end position="277"/>
    </location>
</feature>
<feature type="binding site" evidence="1">
    <location>
        <position position="34"/>
    </location>
    <ligand>
        <name>[2Fe-2S] cluster</name>
        <dbReference type="ChEBI" id="CHEBI:190135"/>
    </ligand>
</feature>
<feature type="binding site" evidence="1">
    <location>
        <position position="45"/>
    </location>
    <ligand>
        <name>[2Fe-2S] cluster</name>
        <dbReference type="ChEBI" id="CHEBI:190135"/>
    </ligand>
</feature>
<feature type="binding site" evidence="1">
    <location>
        <position position="48"/>
    </location>
    <ligand>
        <name>[2Fe-2S] cluster</name>
        <dbReference type="ChEBI" id="CHEBI:190135"/>
    </ligand>
</feature>
<feature type="binding site" evidence="1">
    <location>
        <position position="67"/>
    </location>
    <ligand>
        <name>[2Fe-2S] cluster</name>
        <dbReference type="ChEBI" id="CHEBI:190135"/>
    </ligand>
</feature>
<feature type="binding site" evidence="5">
    <location>
        <position position="99"/>
    </location>
    <ligand>
        <name>[4Fe-4S] cluster</name>
        <dbReference type="ChEBI" id="CHEBI:49883"/>
        <label>1</label>
    </ligand>
</feature>
<feature type="binding site" evidence="5">
    <location>
        <position position="103"/>
    </location>
    <ligand>
        <name>[4Fe-4S] cluster</name>
        <dbReference type="ChEBI" id="CHEBI:49883"/>
        <label>1</label>
    </ligand>
</feature>
<feature type="binding site" evidence="5">
    <location>
        <position position="106"/>
    </location>
    <ligand>
        <name>[4Fe-4S] cluster</name>
        <dbReference type="ChEBI" id="CHEBI:49883"/>
        <label>1</label>
    </ligand>
</feature>
<feature type="binding site" evidence="5">
    <location>
        <position position="112"/>
    </location>
    <ligand>
        <name>[4Fe-4S] cluster</name>
        <dbReference type="ChEBI" id="CHEBI:49883"/>
        <label>1</label>
    </ligand>
</feature>
<feature type="binding site" evidence="1">
    <location>
        <position position="151"/>
    </location>
    <ligand>
        <name>[4Fe-4S] cluster</name>
        <dbReference type="ChEBI" id="CHEBI:49883"/>
        <label>2</label>
    </ligand>
</feature>
<feature type="binding site" evidence="1">
    <location>
        <position position="154"/>
    </location>
    <ligand>
        <name>[4Fe-4S] cluster</name>
        <dbReference type="ChEBI" id="CHEBI:49883"/>
        <label>2</label>
    </ligand>
</feature>
<feature type="binding site" evidence="1">
    <location>
        <position position="157"/>
    </location>
    <ligand>
        <name>[4Fe-4S] cluster</name>
        <dbReference type="ChEBI" id="CHEBI:49883"/>
        <label>2</label>
    </ligand>
</feature>
<feature type="binding site" evidence="1">
    <location>
        <position position="201"/>
    </location>
    <ligand>
        <name>[4Fe-4S] cluster</name>
        <dbReference type="ChEBI" id="CHEBI:49883"/>
        <label>2</label>
    </ligand>
</feature>
<feature type="binding site" evidence="2">
    <location>
        <position position="228"/>
    </location>
    <ligand>
        <name>[4Fe-4S] cluster</name>
        <dbReference type="ChEBI" id="CHEBI:49883"/>
        <label>3</label>
    </ligand>
</feature>
<feature type="binding site" evidence="2">
    <location>
        <position position="231"/>
    </location>
    <ligand>
        <name>[4Fe-4S] cluster</name>
        <dbReference type="ChEBI" id="CHEBI:49883"/>
        <label>3</label>
    </ligand>
</feature>
<feature type="binding site" evidence="2">
    <location>
        <position position="235"/>
    </location>
    <ligand>
        <name>[4Fe-4S] cluster</name>
        <dbReference type="ChEBI" id="CHEBI:49883"/>
        <label>3</label>
    </ligand>
</feature>
<feature type="binding site" evidence="2">
    <location>
        <position position="263"/>
    </location>
    <ligand>
        <name>[4Fe-4S] cluster</name>
        <dbReference type="ChEBI" id="CHEBI:49883"/>
        <label>3</label>
    </ligand>
</feature>
<accession>Q8K9Y2</accession>
<reference key="1">
    <citation type="journal article" date="2002" name="Science">
        <title>50 million years of genomic stasis in endosymbiotic bacteria.</title>
        <authorList>
            <person name="Tamas I."/>
            <person name="Klasson L."/>
            <person name="Canbaeck B."/>
            <person name="Naeslund A.K."/>
            <person name="Eriksson A.-S."/>
            <person name="Wernegreen J.J."/>
            <person name="Sandstroem J.P."/>
            <person name="Moran N.A."/>
            <person name="Andersson S.G.E."/>
        </authorList>
    </citation>
    <scope>NUCLEOTIDE SEQUENCE [LARGE SCALE GENOMIC DNA]</scope>
    <source>
        <strain>Sg</strain>
    </source>
</reference>
<sequence>MAKIYVDGKAYCMSESDNLLQACLSSGLNIPYFCWHPILGSLGACRQCAVTQYNSSLDNQGKLIMSCMTPVIDGTIISINDDTSKKFRSNIVELLLTNHPHDCPVCEEGGNCHLQDMTVMTTHNFRNYRFSKRTHKNQYLGSFIKHEMNRCIGCYRCVRYYRDYADGTDLDVYGANNNIYFGRIEHGVLENEHSGNLIEICPTGVFTDKTHSKKYNRKWDMQYAPGICQNCSIGCNISIGERYGEIRRIENRYHESINHYLICDLGRFGYSHTNLKNRPKKPILSTKENDVNILNFNKAIEYATNFFQRYKNVIGVGSIRSSIENNFALQELVGKENFCNGMSDKENSCIKLILDTLKNNQLYIPSLKEIESYDTILILGEDLTQTAPRIALAVRQAMKNKAKDLAELYGIPKWNAAPISQISEIYKNYLYIFNTHETKLDNIADWSYFSSIDNQVRFARAIAYELDKNLPDISFLDSNLRKKASLIAKKIISSKKVLIISGSHVYSKSIIQASINIAISINQKNINHVGLTFVTSSSNTLGLGILGGFSIENALKKLKNREAEAIIFMEYDLYRYISKHDCDVLFKKNDNIMSIDHQYTQTYKNSGFALPSVNFTESSGTIVNFEGRAQRFFQVYDPMFYDKKNCLYVSWKWLSFIKSKIEKKEISWINLDNIISEYSDKYPIFKKIKTAGPNASFRVHGQKIARSPHRSSGRTALRANINIHEPSQPKDADTMFSFSMEGYSQPNKSISHIPFAWFPGWNSPQAWNKFQKEIGRQLISGDSGVHLFKSNKKILDIYFHFSPKKFIKEKYWYVIPYYHIFGNEELTQYSSIIKQNIPLEYVLISELDGLELGLKKNSIVEFNCLNQDFRLPIRLSKHLTSKHIGLPIGRKGFPISLIGEKVKSLWEVMS</sequence>
<proteinExistence type="inferred from homology"/>
<comment type="function">
    <text evidence="1">NDH-1 shuttles electrons from NADH, via FMN and iron-sulfur (Fe-S) centers, to quinones in the respiratory chain. Couples the redox reaction to proton translocation (for every two electrons transferred, four hydrogen ions are translocated across the cytoplasmic membrane), and thus conserves the redox energy in a proton gradient (By similarity).</text>
</comment>
<comment type="catalytic activity">
    <reaction>
        <text>a quinone + NADH + 5 H(+)(in) = a quinol + NAD(+) + 4 H(+)(out)</text>
        <dbReference type="Rhea" id="RHEA:57888"/>
        <dbReference type="ChEBI" id="CHEBI:15378"/>
        <dbReference type="ChEBI" id="CHEBI:24646"/>
        <dbReference type="ChEBI" id="CHEBI:57540"/>
        <dbReference type="ChEBI" id="CHEBI:57945"/>
        <dbReference type="ChEBI" id="CHEBI:132124"/>
    </reaction>
</comment>
<comment type="cofactor">
    <cofactor evidence="1">
        <name>[2Fe-2S] cluster</name>
        <dbReference type="ChEBI" id="CHEBI:190135"/>
    </cofactor>
    <text evidence="1">Binds 1 [2Fe-2S] cluster per subunit.</text>
</comment>
<comment type="cofactor">
    <cofactor evidence="1">
        <name>[4Fe-4S] cluster</name>
        <dbReference type="ChEBI" id="CHEBI:49883"/>
    </cofactor>
    <text evidence="1">Binds 3 [4Fe-4S] clusters per subunit.</text>
</comment>
<comment type="subunit">
    <text evidence="1">Composed of 13 different subunits. Subunits NuoCD, E, F, and G constitute the peripheral sector of the complex (By similarity).</text>
</comment>
<comment type="similarity">
    <text evidence="6">Belongs to the complex I 75 kDa subunit family.</text>
</comment>
<gene>
    <name type="primary">nuoG</name>
    <name type="ordered locus">BUsg_152</name>
</gene>
<evidence type="ECO:0000250" key="1"/>
<evidence type="ECO:0000255" key="2"/>
<evidence type="ECO:0000255" key="3">
    <source>
        <dbReference type="PROSITE-ProRule" id="PRU00465"/>
    </source>
</evidence>
<evidence type="ECO:0000255" key="4">
    <source>
        <dbReference type="PROSITE-ProRule" id="PRU01004"/>
    </source>
</evidence>
<evidence type="ECO:0000255" key="5">
    <source>
        <dbReference type="PROSITE-ProRule" id="PRU01184"/>
    </source>
</evidence>
<evidence type="ECO:0000305" key="6"/>
<name>NUOG_BUCAP</name>
<keyword id="KW-0001">2Fe-2S</keyword>
<keyword id="KW-0004">4Fe-4S</keyword>
<keyword id="KW-0408">Iron</keyword>
<keyword id="KW-0411">Iron-sulfur</keyword>
<keyword id="KW-0479">Metal-binding</keyword>
<keyword id="KW-0520">NAD</keyword>
<keyword id="KW-0874">Quinone</keyword>
<keyword id="KW-1278">Translocase</keyword>